<name>GSK3B_RAT</name>
<feature type="chain" id="PRO_0000085982" description="Glycogen synthase kinase-3 beta">
    <location>
        <begin position="1"/>
        <end position="420"/>
    </location>
</feature>
<feature type="domain" description="Protein kinase" evidence="3">
    <location>
        <begin position="56"/>
        <end position="340"/>
    </location>
</feature>
<feature type="region of interest" description="Disordered" evidence="5">
    <location>
        <begin position="1"/>
        <end position="53"/>
    </location>
</feature>
<feature type="region of interest" description="Disordered" evidence="5">
    <location>
        <begin position="385"/>
        <end position="420"/>
    </location>
</feature>
<feature type="compositionally biased region" description="Polar residues" evidence="5">
    <location>
        <begin position="1"/>
        <end position="22"/>
    </location>
</feature>
<feature type="compositionally biased region" description="Low complexity" evidence="5">
    <location>
        <begin position="386"/>
        <end position="401"/>
    </location>
</feature>
<feature type="compositionally biased region" description="Low complexity" evidence="5">
    <location>
        <begin position="409"/>
        <end position="420"/>
    </location>
</feature>
<feature type="active site" description="Proton acceptor" evidence="3 4">
    <location>
        <position position="181"/>
    </location>
</feature>
<feature type="binding site" evidence="3">
    <location>
        <begin position="62"/>
        <end position="70"/>
    </location>
    <ligand>
        <name>ATP</name>
        <dbReference type="ChEBI" id="CHEBI:30616"/>
    </ligand>
</feature>
<feature type="binding site" evidence="3">
    <location>
        <position position="85"/>
    </location>
    <ligand>
        <name>ATP</name>
        <dbReference type="ChEBI" id="CHEBI:30616"/>
    </ligand>
</feature>
<feature type="modified residue" description="Phosphoserine; by PKB/AKT1, RPS6KA3 and SGK3" evidence="1">
    <location>
        <position position="9"/>
    </location>
</feature>
<feature type="modified residue" description="Phosphotyrosine" evidence="9">
    <location>
        <position position="216"/>
    </location>
</feature>
<feature type="modified residue" description="Phosphoserine" evidence="14">
    <location>
        <position position="389"/>
    </location>
</feature>
<feature type="lipid moiety-binding region" description="S-palmitoyl cysteine" evidence="1">
    <location>
        <position position="14"/>
    </location>
</feature>
<feature type="mutagenesis site" description="Loss of phosphorylation; No inhibition of activity." evidence="8">
    <original>S</original>
    <variation>A</variation>
    <location>
        <position position="9"/>
    </location>
</feature>
<feature type="mutagenesis site" description="Loss of phosphorylation and strong reduction of activity." evidence="9">
    <original>Y</original>
    <variation>F</variation>
    <location>
        <position position="216"/>
    </location>
</feature>
<feature type="sequence conflict" description="In Ref. 2; CAA52020." evidence="11" ref="2">
    <original>M</original>
    <variation>V</variation>
    <location>
        <position position="240"/>
    </location>
</feature>
<reference key="1">
    <citation type="journal article" date="1990" name="EMBO J.">
        <title>Molecular cloning and expression of glycogen synthase kinase-3/factor A.</title>
        <authorList>
            <person name="Woodgett J.R."/>
        </authorList>
    </citation>
    <scope>NUCLEOTIDE SEQUENCE [MRNA]</scope>
    <source>
        <strain>Sprague-Dawley</strain>
        <tissue>Brain</tissue>
    </source>
</reference>
<reference key="2">
    <citation type="journal article" date="1993" name="FEBS Lett.">
        <title>Glycogen synthase kinase 3 beta is identical to tau protein kinase I generating several epitopes of paired helical filaments.</title>
        <authorList>
            <person name="Ishiguro K."/>
            <person name="Shiratsuchi A."/>
            <person name="Sato S."/>
            <person name="Omori A."/>
            <person name="Arioka M."/>
            <person name="Kobayashi S."/>
            <person name="Uchida T."/>
            <person name="Imahori K."/>
        </authorList>
    </citation>
    <scope>NUCLEOTIDE SEQUENCE [MRNA]</scope>
    <source>
        <strain>Sprague-Dawley</strain>
        <tissue>Brain cortex</tissue>
    </source>
</reference>
<reference key="3">
    <citation type="journal article" date="1993" name="EMBO J.">
        <title>Modulation of the glycogen synthase kinase-3 family by tyrosine phosphorylation.</title>
        <authorList>
            <person name="Hughes K."/>
            <person name="Nikolakaki E."/>
            <person name="Plyte S.E."/>
            <person name="Totty N.F."/>
            <person name="Woodgett J.R."/>
        </authorList>
    </citation>
    <scope>PHOSPHORYLATION AT TYR-216</scope>
    <scope>MUTAGENESIS OF TYR-216</scope>
</reference>
<reference key="4">
    <citation type="journal article" date="1998" name="EMBO J.">
        <title>Axin, a negative regulator of the Wnt signaling pathway, forms a complex with GSK-3beta and beta-catenin and promotes GSK-3beta-dependent phosphorylation of beta-catenin.</title>
        <authorList>
            <person name="Ikeda S."/>
            <person name="Kishida S."/>
            <person name="Yamamoto H."/>
            <person name="Murai H."/>
            <person name="Koyama S."/>
            <person name="Kikuchi A."/>
        </authorList>
    </citation>
    <scope>FUNCTION</scope>
    <scope>INTERACTION WITH AXIN1</scope>
</reference>
<reference key="5">
    <citation type="journal article" date="2006" name="Genes Dev.">
        <title>The role of microtubule actin cross-linking factor 1 (MACF1) in the Wnt signaling pathway.</title>
        <authorList>
            <person name="Chen H.J."/>
            <person name="Lin C.M."/>
            <person name="Lin C.S."/>
            <person name="Perez-Olle R."/>
            <person name="Leung C.L."/>
            <person name="Liem R.K."/>
        </authorList>
    </citation>
    <scope>SUBCELLULAR LOCATION</scope>
    <scope>IDENTIFICATION IN A COMPLEX WITH MACF1; APC; AXIN1 AND CTNNB1</scope>
</reference>
<reference key="6">
    <citation type="journal article" date="2007" name="J. Biol. Chem.">
        <title>Inhibition of GSK3 promotes replication and survival of pancreatic beta cells.</title>
        <authorList>
            <person name="Mussmann R."/>
            <person name="Geese M."/>
            <person name="Harder F."/>
            <person name="Kegel S."/>
            <person name="Andag U."/>
            <person name="Lomow A."/>
            <person name="Burk U."/>
            <person name="Onichtchouk D."/>
            <person name="Dohrmann C."/>
            <person name="Austen M."/>
        </authorList>
    </citation>
    <scope>FUNCTION IN REGULATION OF PANCREATIC BETA-CELLS</scope>
</reference>
<reference key="7">
    <citation type="journal article" date="2008" name="J. Biol. Chem.">
        <title>Glycogen synthase kinase (GSK) 3beta directly phosphorylates Serine 212 in the regulatory loop and inhibits microtubule affinity-regulating kinase (MARK) 2.</title>
        <authorList>
            <person name="Timm T."/>
            <person name="Balusamy K."/>
            <person name="Li X."/>
            <person name="Biernat J."/>
            <person name="Mandelkow E."/>
            <person name="Mandelkow E.M."/>
        </authorList>
    </citation>
    <scope>FUNCTION IN PHOSPHORYLATION OF MARK2</scope>
    <scope>MUTAGENESIS OF SER-9</scope>
</reference>
<reference key="8">
    <citation type="journal article" date="2012" name="Nat. Commun.">
        <title>Quantitative maps of protein phosphorylation sites across 14 different rat organs and tissues.</title>
        <authorList>
            <person name="Lundby A."/>
            <person name="Secher A."/>
            <person name="Lage K."/>
            <person name="Nordsborg N.B."/>
            <person name="Dmytriyev A."/>
            <person name="Lundby C."/>
            <person name="Olsen J.V."/>
        </authorList>
    </citation>
    <scope>PHOSPHORYLATION [LARGE SCALE ANALYSIS] AT SER-389</scope>
    <scope>IDENTIFICATION BY MASS SPECTROMETRY [LARGE SCALE ANALYSIS]</scope>
</reference>
<gene>
    <name evidence="13" type="primary">Gsk3b</name>
</gene>
<accession>P18266</accession>
<protein>
    <recommendedName>
        <fullName evidence="11">Glycogen synthase kinase-3 beta</fullName>
        <shortName>GSK-3 beta</shortName>
        <ecNumber evidence="1">2.7.11.26</ecNumber>
    </recommendedName>
    <alternativeName>
        <fullName>Factor A</fullName>
        <shortName>FA</shortName>
    </alternativeName>
    <alternativeName>
        <fullName>Serine/threonine-protein kinase GSK3B</fullName>
        <ecNumber evidence="1">2.7.11.1</ecNumber>
    </alternativeName>
</protein>
<comment type="function">
    <text evidence="1 2 7 8 10">Constitutively active protein kinase that acts as a negative regulator in the hormonal control of glucose homeostasis, Wnt signaling and regulation of transcription factors and microtubules, by phosphorylating and inactivating glycogen synthase (GYS1 or GYS2), EIF2B, CTNNB1/beta-catenin, APC, AXIN1, DPYSL2/CRMP2, JUN, NFATC1/NFATC, MAPT/TAU and MACF1. Requires primed phosphorylation of the majority of its substrates (PubMed:9482734). In skeletal muscle, contributes to insulin regulation of glycogen synthesis by phosphorylating and inhibiting GYS1 activity and hence glycogen synthesis (By similarity). May also mediate the development of insulin resistance by regulating activation of transcription factors (By similarity). Regulates protein synthesis by controlling the activity of initiation factor 2B (EIF2BE/EIF2B5) in the same manner as glycogen synthase (By similarity). In Wnt signaling, GSK3B forms a multimeric complex with APC, AXIN1 and CTNNB1/beta-catenin and phosphorylates the N-terminus of CTNNB1 leading to its degradation mediated by ubiquitin/proteasomes (PubMed:9482734). Phosphorylates JUN at sites proximal to its DNA-binding domain, thereby reducing its affinity for DNA. Phosphorylates NFATC1/NFATC on conserved serine residues promoting NFATC1/NFATC nuclear export, shutting off NFATC1/NFATC gene regulation, and thereby opposing the action of calcineurin. Phosphorylates MAPT/TAU on 'Thr-548', decreasing significantly MAPT/TAU ability to bind and stabilize microtubules. MAPT/TAU is the principal component of neurofibrillary tangles in Alzheimer disease. Plays an important role in ERBB2-dependent stabilization of microtubules at the cell cortex (By similarity). Phosphorylates MACF1, inhibiting its binding to microtubules which is critical for its role in bulge stem cell migration and skin wound repair. Probably regulates NF-kappa-B (NFKB1) at the transcriptional level and is required for the NF-kappa-B-mediated anti-apoptotic response to TNF-alpha (TNF/TNFA) (By similarity). Negatively regulates replication in pancreatic beta-cells, resulting in apoptosis, loss of beta-cells and diabetes (PubMed:17242403). Through phosphorylation of the anti-apoptotic protein MCL1, may control cell apoptosis in response to growth factors deprivation (By similarity). Phosphorylates MUC1 in breast cancer cells, decreasing the interaction of MUC1 with CTNNB1/beta-catenin. Is necessary for the establishment of neuronal polarity and axon outgrowth (By similarity). Phosphorylates MARK2, leading to inhibition of its activity (PubMed:18424437). Phosphorylates SIK1 at 'Thr-182', leading to sustainment of its activity. Phosphorylates ZC3HAV1 which enhances its antiviral activity. Phosphorylates SNAI1, leading to its ubiquitination and proteasomal degradation. Phosphorylates SFPQ at 'Thr-687' upon T-cell activation. Phosphorylates NR1D1 st 'Ser-55' and 'Ser-59' and stabilizes it by protecting it from proteasomal degradation. Regulates the circadian clock via phosphorylation of the major clock components including BMAL1, CLOCK and PER2. Phosphorylates CLOCK AT 'Ser-427' and targets it for proteasomal degradation. Phosphorylates BMAL1 at 'Ser-17' and 'Ser-21' and primes it for ubiquitination and proteasomal degradation. Phosphorylates FBXL2 at 'Thr-404' and primes it for ubiquitination by the SCF(FBXO3) complex and proteasomal degradation. Phosphorylates OGT at 'Ser-3' or 'Ser-4' which positively regulates its activity. Phosphorylates MYCN in neuroblastoma cells which may promote its degradation (By similarity). Regulates the circadian rhythmicity of hippocampal long-term potentiation and BMAL1 and PER2 expression (By similarity). Acts as a regulator of autophagy by mediating phosphorylation of KAT5/TIP60 under starvation conditions, activating KAT5/TIP60 acetyltransferase activity and promoting acetylation of key autophagy regulators, such as ULK1 and RUBCNL/Pacer. Negatively regulates extrinsic apoptotic signaling pathway via death domain receptors. Promotes the formation of an anti-apoptotic complex, made of DDX3X, BRIC2 and GSK3B, at death receptors, including TNFRSF10B. The anti-apoptotic function is most effective with weak apoptotic signals and can be overcome by stronger stimulation (By similarity). Phosphorylates E2F1, promoting the interaction between E2F1 and USP11, stabilizing E2F1 and promoting its activity (By similarity). Phosphorylates mTORC2 complex component RICTOR at 'Ser-1235' in response to endoplasmic stress, inhibiting mTORC2 (By similarity). Phosphorylates FXR1, promoting FXR1 ubiquitination by the SCF(FBXO4) complex and FXR1 degradation by the proteasome (By similarity). Phosphorylates interleukin-22 receptor subunit IL22RA1, preventing its proteasomal degradation (By similarity).</text>
</comment>
<comment type="catalytic activity">
    <reaction evidence="1">
        <text>L-seryl-[tau protein] + ATP = O-phospho-L-seryl-[tau protein] + ADP + H(+)</text>
        <dbReference type="Rhea" id="RHEA:12801"/>
        <dbReference type="Rhea" id="RHEA-COMP:13701"/>
        <dbReference type="Rhea" id="RHEA-COMP:13702"/>
        <dbReference type="ChEBI" id="CHEBI:15378"/>
        <dbReference type="ChEBI" id="CHEBI:29999"/>
        <dbReference type="ChEBI" id="CHEBI:30616"/>
        <dbReference type="ChEBI" id="CHEBI:83421"/>
        <dbReference type="ChEBI" id="CHEBI:456216"/>
        <dbReference type="EC" id="2.7.11.26"/>
    </reaction>
</comment>
<comment type="catalytic activity">
    <reaction evidence="1">
        <text>L-threonyl-[tau protein] + ATP = O-phospho-L-threonyl-[tau protein] + ADP + H(+)</text>
        <dbReference type="Rhea" id="RHEA:53904"/>
        <dbReference type="Rhea" id="RHEA-COMP:13703"/>
        <dbReference type="Rhea" id="RHEA-COMP:13704"/>
        <dbReference type="ChEBI" id="CHEBI:15378"/>
        <dbReference type="ChEBI" id="CHEBI:30013"/>
        <dbReference type="ChEBI" id="CHEBI:30616"/>
        <dbReference type="ChEBI" id="CHEBI:61977"/>
        <dbReference type="ChEBI" id="CHEBI:456216"/>
        <dbReference type="EC" id="2.7.11.26"/>
    </reaction>
</comment>
<comment type="catalytic activity">
    <reaction evidence="1">
        <text>L-seryl-[protein] + ATP = O-phospho-L-seryl-[protein] + ADP + H(+)</text>
        <dbReference type="Rhea" id="RHEA:17989"/>
        <dbReference type="Rhea" id="RHEA-COMP:9863"/>
        <dbReference type="Rhea" id="RHEA-COMP:11604"/>
        <dbReference type="ChEBI" id="CHEBI:15378"/>
        <dbReference type="ChEBI" id="CHEBI:29999"/>
        <dbReference type="ChEBI" id="CHEBI:30616"/>
        <dbReference type="ChEBI" id="CHEBI:83421"/>
        <dbReference type="ChEBI" id="CHEBI:456216"/>
        <dbReference type="EC" id="2.7.11.1"/>
    </reaction>
</comment>
<comment type="catalytic activity">
    <reaction evidence="1">
        <text>L-threonyl-[protein] + ATP = O-phospho-L-threonyl-[protein] + ADP + H(+)</text>
        <dbReference type="Rhea" id="RHEA:46608"/>
        <dbReference type="Rhea" id="RHEA-COMP:11060"/>
        <dbReference type="Rhea" id="RHEA-COMP:11605"/>
        <dbReference type="ChEBI" id="CHEBI:15378"/>
        <dbReference type="ChEBI" id="CHEBI:30013"/>
        <dbReference type="ChEBI" id="CHEBI:30616"/>
        <dbReference type="ChEBI" id="CHEBI:61977"/>
        <dbReference type="ChEBI" id="CHEBI:456216"/>
        <dbReference type="EC" id="2.7.11.1"/>
    </reaction>
</comment>
<comment type="activity regulation">
    <text evidence="1 2">Activated by phosphorylation at Tyr-216. In response to insulin, inhibited by phosphorylation at Ser-9 by PKB/AKT1; phosphorylation at this site causes a conformational change, preventing access of substrates to the active site (By similarity). Inhibited by IL22 treatment which also triggers phosphorylation at Ser-9, promoting inactivation (By similarity). Inhibited by lithium (By similarity).</text>
</comment>
<comment type="subunit">
    <text evidence="1 2 6 10">Monomer (By similarity). Interacts with DAB2IP (via C2 domain); the interaction stimulates GSK3B kinase activation (By similarity). Interacts (via C2 domain) with PPP2CA (By similarity). Interacts with ARRB2, AXIN1, CABYR, DISC1, MMP2, MUC1, NIN, PRUNE1 and ZBED3 (By similarity). Interacts with AXIN1; the interaction mediates hyperphosphorylation of CTNNB1 leading to its ubiquitination and destruction (PubMed:9482734). Interacts with and phosphorylates SNAI1 (By similarity). Interacts with DNM1L (via a C-terminal domain) (By similarity). Found in a complex composed of MACF1, APC, AXIN1, CTNNB1 and GSK3B (PubMed:16815997). Interacts with SGK3 (By similarity). Interacts with the CLOCK-BMAL1 heterodimer (By similarity). Interacts with the BMAL1 (By similarity). Interacts with CTNND2 (By similarity). The complex composed, at least, of APC, CTNNB1 and GSK3B interacts with JPT1; the interaction requires the inactive form of GSK3B (phosphorylated at 'Ser-9') (By similarity). Forms a complex composed of PRKAR2A or PRKAR2B, GSK3B and GSKIP through GSKIP interaction; facilitates PKA-induced phosphorylation and regulates GSK3B activity (By similarity). Interacts with GSKIP (By similarity). Interacts with GID8 (By similarity). Interacts with PIWIL2 (By similarity). Interacts with LMBR1L (By similarity). Interacts with DDX3X (By similarity). Interacts with BIRC2 (By similarity). Interacts with TNFRSF10B; TNFRSF10B stimulation inhibits GSK3B kinase activity (By similarity). Found in a complex with SLC39A6, SLC39A10 and with GSK3B that controls NCAM1 phosphorylation (By similarity). Interacts with PKP3 (via ARM repeats); the interaction may be involved in PKP3 protein degradation (By similarity).</text>
</comment>
<comment type="subcellular location">
    <subcellularLocation>
        <location evidence="1">Cytoplasm</location>
    </subcellularLocation>
    <subcellularLocation>
        <location evidence="1">Nucleus</location>
    </subcellularLocation>
    <subcellularLocation>
        <location evidence="6">Membrane</location>
    </subcellularLocation>
    <subcellularLocation>
        <location evidence="1">Cell membrane</location>
    </subcellularLocation>
    <text evidence="1">The phosphorylated form shows localization to cytoplasm and cell membrane. The MEMO1-RHOA-DIAPH1 signaling pathway controls localization of the phosphorylated form to the cell membrane (By similarity).</text>
</comment>
<comment type="PTM">
    <text evidence="1 2">Phosphorylated by AKT1 and ILK1. Upon insulin-mediated signaling, the activated PKB/AKT1 and RPS6KA3 protein kinases phosphorylate and deactivate GSK3B, resulting in the dephosphorylation and activation of GYS1. Activated by phosphorylation at Tyr-216 (By similarity). Inactivated by phosphorylation at Ser-9 (By similarity). Phosphorylated in a circadian manner in the hippocampus (By similarity).</text>
</comment>
<comment type="PTM">
    <text evidence="1">Mono-ADP-ribosylation by PARP10 negatively regulates kinase activity.</text>
</comment>
<comment type="PTM">
    <text evidence="1">Palmitoylated. Palmitoylation by ZDHHC4 prevents AKT1-mediated phosphorylation.</text>
</comment>
<comment type="miscellaneous">
    <text evidence="12">Simultaneous silencing of GSK3A and GSK3B by RNAi stimulates replication and promotes survival of INS-1E pancreatic beta cells.</text>
</comment>
<comment type="similarity">
    <text evidence="11">Belongs to the protein kinase superfamily. CMGC Ser/Thr protein kinase family. GSK-3 subfamily.</text>
</comment>
<sequence>MSGRPRTTSFAESCKPVQQPSAFGSMKVSRDKDGSKVTTVVATPGQGPDRPQEVSYTDTKVIGNGSFGVVYQAKLCDSGELVAIKKVLQDKRFKNRELQIMRKLDHCNIVRLRYFFYSSGEKKDEVYLNLVLDYVPETVYRVARHYSRAKQTLPVIYVKLYMYQLFRSLAYIHSFGICHRDIKPQNLLLDPDTAVLKLCDFGSAKQLVRGEPNVSYICSRYYRAPELIFGATDYTSSIDMWSAGCVLAELLLGQPIFPGDSGVDQLVEIIKVLGTPTREQIREMNPNYTEFKFPQIKAHPWTKVFRPRTPPEAIALCSRLLEYTPTARLTPLEACAHSFFDELRDPNVKLPNGRDTPALFNFTTQELSSNPPLATILIPPHARIQAAASPPANATAASDTNAGDRGQTNNAASASASNST</sequence>
<proteinExistence type="evidence at protein level"/>
<organism>
    <name type="scientific">Rattus norvegicus</name>
    <name type="common">Rat</name>
    <dbReference type="NCBI Taxonomy" id="10116"/>
    <lineage>
        <taxon>Eukaryota</taxon>
        <taxon>Metazoa</taxon>
        <taxon>Chordata</taxon>
        <taxon>Craniata</taxon>
        <taxon>Vertebrata</taxon>
        <taxon>Euteleostomi</taxon>
        <taxon>Mammalia</taxon>
        <taxon>Eutheria</taxon>
        <taxon>Euarchontoglires</taxon>
        <taxon>Glires</taxon>
        <taxon>Rodentia</taxon>
        <taxon>Myomorpha</taxon>
        <taxon>Muroidea</taxon>
        <taxon>Muridae</taxon>
        <taxon>Murinae</taxon>
        <taxon>Rattus</taxon>
    </lineage>
</organism>
<dbReference type="EC" id="2.7.11.26" evidence="1"/>
<dbReference type="EC" id="2.7.11.1" evidence="1"/>
<dbReference type="EMBL" id="X53428">
    <property type="protein sequence ID" value="CAA37519.1"/>
    <property type="molecule type" value="mRNA"/>
</dbReference>
<dbReference type="EMBL" id="X73653">
    <property type="protein sequence ID" value="CAA52020.1"/>
    <property type="molecule type" value="mRNA"/>
</dbReference>
<dbReference type="PIR" id="S14708">
    <property type="entry name" value="TVRTKB"/>
</dbReference>
<dbReference type="RefSeq" id="NP_114469.1">
    <property type="nucleotide sequence ID" value="NM_032080.1"/>
</dbReference>
<dbReference type="SMR" id="P18266"/>
<dbReference type="BioGRID" id="249893">
    <property type="interactions" value="12"/>
</dbReference>
<dbReference type="CORUM" id="P18266"/>
<dbReference type="DIP" id="DIP-40957N"/>
<dbReference type="FunCoup" id="P18266">
    <property type="interactions" value="4408"/>
</dbReference>
<dbReference type="IntAct" id="P18266">
    <property type="interactions" value="1"/>
</dbReference>
<dbReference type="MINT" id="P18266"/>
<dbReference type="STRING" id="10116.ENSRNOP00000075708"/>
<dbReference type="BindingDB" id="P18266"/>
<dbReference type="ChEMBL" id="CHEMBL3669"/>
<dbReference type="iPTMnet" id="P18266"/>
<dbReference type="PhosphoSitePlus" id="P18266"/>
<dbReference type="jPOST" id="P18266"/>
<dbReference type="PaxDb" id="10116-ENSRNOP00000003867"/>
<dbReference type="GeneID" id="84027"/>
<dbReference type="KEGG" id="rno:84027"/>
<dbReference type="UCSC" id="RGD:70982">
    <property type="organism name" value="rat"/>
</dbReference>
<dbReference type="AGR" id="RGD:70982"/>
<dbReference type="CTD" id="2932"/>
<dbReference type="RGD" id="70982">
    <property type="gene designation" value="Gsk3b"/>
</dbReference>
<dbReference type="eggNOG" id="KOG0658">
    <property type="taxonomic scope" value="Eukaryota"/>
</dbReference>
<dbReference type="InParanoid" id="P18266"/>
<dbReference type="OrthoDB" id="272141at2759"/>
<dbReference type="PhylomeDB" id="P18266"/>
<dbReference type="TreeFam" id="TF101104"/>
<dbReference type="BRENDA" id="2.7.11.1">
    <property type="organism ID" value="5301"/>
</dbReference>
<dbReference type="BRENDA" id="2.7.11.26">
    <property type="organism ID" value="5301"/>
</dbReference>
<dbReference type="Reactome" id="R-RNO-195253">
    <property type="pathway name" value="Degradation of beta-catenin by the destruction complex"/>
</dbReference>
<dbReference type="Reactome" id="R-RNO-196299">
    <property type="pathway name" value="Beta-catenin phosphorylation cascade"/>
</dbReference>
<dbReference type="Reactome" id="R-RNO-3371453">
    <property type="pathway name" value="Regulation of HSF1-mediated heat shock response"/>
</dbReference>
<dbReference type="Reactome" id="R-RNO-399956">
    <property type="pathway name" value="CRMPs in Sema3A signaling"/>
</dbReference>
<dbReference type="Reactome" id="R-RNO-4641262">
    <property type="pathway name" value="Disassembly of the destruction complex and recruitment of AXIN to the membrane"/>
</dbReference>
<dbReference type="Reactome" id="R-RNO-5250924">
    <property type="pathway name" value="B-WICH complex positively regulates rRNA expression"/>
</dbReference>
<dbReference type="Reactome" id="R-RNO-5610785">
    <property type="pathway name" value="GLI3 is processed to GLI3R by the proteasome"/>
</dbReference>
<dbReference type="Reactome" id="R-RNO-9762114">
    <property type="pathway name" value="GSK3B and BTRC:CUL1-mediated-degradation of NFE2L2"/>
</dbReference>
<dbReference type="Reactome" id="R-RNO-9856649">
    <property type="pathway name" value="Transcriptional and post-translational regulation of MITF-M expression and activity"/>
</dbReference>
<dbReference type="PRO" id="PR:P18266"/>
<dbReference type="Proteomes" id="UP000002494">
    <property type="component" value="Unplaced"/>
</dbReference>
<dbReference type="GO" id="GO:0030424">
    <property type="term" value="C:axon"/>
    <property type="evidence" value="ECO:0000314"/>
    <property type="project" value="RGD"/>
</dbReference>
<dbReference type="GO" id="GO:0030877">
    <property type="term" value="C:beta-catenin destruction complex"/>
    <property type="evidence" value="ECO:0000314"/>
    <property type="project" value="BHF-UCL"/>
</dbReference>
<dbReference type="GO" id="GO:0005813">
    <property type="term" value="C:centrosome"/>
    <property type="evidence" value="ECO:0000266"/>
    <property type="project" value="RGD"/>
</dbReference>
<dbReference type="GO" id="GO:0005737">
    <property type="term" value="C:cytoplasm"/>
    <property type="evidence" value="ECO:0000250"/>
    <property type="project" value="UniProtKB"/>
</dbReference>
<dbReference type="GO" id="GO:0005829">
    <property type="term" value="C:cytosol"/>
    <property type="evidence" value="ECO:0000266"/>
    <property type="project" value="RGD"/>
</dbReference>
<dbReference type="GO" id="GO:0030425">
    <property type="term" value="C:dendrite"/>
    <property type="evidence" value="ECO:0000314"/>
    <property type="project" value="RGD"/>
</dbReference>
<dbReference type="GO" id="GO:0043198">
    <property type="term" value="C:dendritic shaft"/>
    <property type="evidence" value="ECO:0000266"/>
    <property type="project" value="RGD"/>
</dbReference>
<dbReference type="GO" id="GO:0043197">
    <property type="term" value="C:dendritic spine"/>
    <property type="evidence" value="ECO:0000314"/>
    <property type="project" value="RGD"/>
</dbReference>
<dbReference type="GO" id="GO:0098978">
    <property type="term" value="C:glutamatergic synapse"/>
    <property type="evidence" value="ECO:0000314"/>
    <property type="project" value="SynGO"/>
</dbReference>
<dbReference type="GO" id="GO:0030426">
    <property type="term" value="C:growth cone"/>
    <property type="evidence" value="ECO:0000266"/>
    <property type="project" value="RGD"/>
</dbReference>
<dbReference type="GO" id="GO:0072687">
    <property type="term" value="C:meiotic spindle"/>
    <property type="evidence" value="ECO:0000266"/>
    <property type="project" value="RGD"/>
</dbReference>
<dbReference type="GO" id="GO:0016020">
    <property type="term" value="C:membrane"/>
    <property type="evidence" value="ECO:0000314"/>
    <property type="project" value="UniProtKB"/>
</dbReference>
<dbReference type="GO" id="GO:0005874">
    <property type="term" value="C:microtubule"/>
    <property type="evidence" value="ECO:0000314"/>
    <property type="project" value="RGD"/>
</dbReference>
<dbReference type="GO" id="GO:0005739">
    <property type="term" value="C:mitochondrion"/>
    <property type="evidence" value="ECO:0007669"/>
    <property type="project" value="GOC"/>
</dbReference>
<dbReference type="GO" id="GO:0043025">
    <property type="term" value="C:neuronal cell body"/>
    <property type="evidence" value="ECO:0000266"/>
    <property type="project" value="RGD"/>
</dbReference>
<dbReference type="GO" id="GO:0005634">
    <property type="term" value="C:nucleus"/>
    <property type="evidence" value="ECO:0000250"/>
    <property type="project" value="UniProtKB"/>
</dbReference>
<dbReference type="GO" id="GO:0048471">
    <property type="term" value="C:perinuclear region of cytoplasm"/>
    <property type="evidence" value="ECO:0000266"/>
    <property type="project" value="RGD"/>
</dbReference>
<dbReference type="GO" id="GO:0005886">
    <property type="term" value="C:plasma membrane"/>
    <property type="evidence" value="ECO:0000266"/>
    <property type="project" value="RGD"/>
</dbReference>
<dbReference type="GO" id="GO:0014069">
    <property type="term" value="C:postsynaptic density"/>
    <property type="evidence" value="ECO:0000266"/>
    <property type="project" value="RGD"/>
</dbReference>
<dbReference type="GO" id="GO:0098793">
    <property type="term" value="C:presynapse"/>
    <property type="evidence" value="ECO:0007669"/>
    <property type="project" value="GOC"/>
</dbReference>
<dbReference type="GO" id="GO:0032991">
    <property type="term" value="C:protein-containing complex"/>
    <property type="evidence" value="ECO:0000314"/>
    <property type="project" value="RGD"/>
</dbReference>
<dbReference type="GO" id="GO:1990904">
    <property type="term" value="C:ribonucleoprotein complex"/>
    <property type="evidence" value="ECO:0000266"/>
    <property type="project" value="RGD"/>
</dbReference>
<dbReference type="GO" id="GO:0098685">
    <property type="term" value="C:Schaffer collateral - CA1 synapse"/>
    <property type="evidence" value="ECO:0000314"/>
    <property type="project" value="SynGO"/>
</dbReference>
<dbReference type="GO" id="GO:1990909">
    <property type="term" value="C:Wnt signalosome"/>
    <property type="evidence" value="ECO:0000266"/>
    <property type="project" value="RGD"/>
</dbReference>
<dbReference type="GO" id="GO:0005524">
    <property type="term" value="F:ATP binding"/>
    <property type="evidence" value="ECO:0000314"/>
    <property type="project" value="RGD"/>
</dbReference>
<dbReference type="GO" id="GO:0008013">
    <property type="term" value="F:beta-catenin binding"/>
    <property type="evidence" value="ECO:0000266"/>
    <property type="project" value="RGD"/>
</dbReference>
<dbReference type="GO" id="GO:0034452">
    <property type="term" value="F:dynactin binding"/>
    <property type="evidence" value="ECO:0000266"/>
    <property type="project" value="RGD"/>
</dbReference>
<dbReference type="GO" id="GO:0070840">
    <property type="term" value="F:dynein complex binding"/>
    <property type="evidence" value="ECO:0000266"/>
    <property type="project" value="RGD"/>
</dbReference>
<dbReference type="GO" id="GO:0005178">
    <property type="term" value="F:integrin binding"/>
    <property type="evidence" value="ECO:0000353"/>
    <property type="project" value="RGD"/>
</dbReference>
<dbReference type="GO" id="GO:0035255">
    <property type="term" value="F:ionotropic glutamate receptor binding"/>
    <property type="evidence" value="ECO:0000353"/>
    <property type="project" value="RGD"/>
</dbReference>
<dbReference type="GO" id="GO:0016301">
    <property type="term" value="F:kinase activity"/>
    <property type="evidence" value="ECO:0000314"/>
    <property type="project" value="RGD"/>
</dbReference>
<dbReference type="GO" id="GO:0051059">
    <property type="term" value="F:NF-kappaB binding"/>
    <property type="evidence" value="ECO:0000266"/>
    <property type="project" value="RGD"/>
</dbReference>
<dbReference type="GO" id="GO:0002039">
    <property type="term" value="F:p53 binding"/>
    <property type="evidence" value="ECO:0000266"/>
    <property type="project" value="RGD"/>
</dbReference>
<dbReference type="GO" id="GO:0002020">
    <property type="term" value="F:protease binding"/>
    <property type="evidence" value="ECO:0000266"/>
    <property type="project" value="RGD"/>
</dbReference>
<dbReference type="GO" id="GO:0034236">
    <property type="term" value="F:protein kinase A catalytic subunit binding"/>
    <property type="evidence" value="ECO:0000266"/>
    <property type="project" value="RGD"/>
</dbReference>
<dbReference type="GO" id="GO:0004672">
    <property type="term" value="F:protein kinase activity"/>
    <property type="evidence" value="ECO:0000250"/>
    <property type="project" value="UniProtKB"/>
</dbReference>
<dbReference type="GO" id="GO:0019901">
    <property type="term" value="F:protein kinase binding"/>
    <property type="evidence" value="ECO:0000353"/>
    <property type="project" value="RGD"/>
</dbReference>
<dbReference type="GO" id="GO:0106310">
    <property type="term" value="F:protein serine kinase activity"/>
    <property type="evidence" value="ECO:0000266"/>
    <property type="project" value="RGD"/>
</dbReference>
<dbReference type="GO" id="GO:0004674">
    <property type="term" value="F:protein serine/threonine kinase activity"/>
    <property type="evidence" value="ECO:0000314"/>
    <property type="project" value="BHF-UCL"/>
</dbReference>
<dbReference type="GO" id="GO:0120283">
    <property type="term" value="F:protein serine/threonine kinase binding"/>
    <property type="evidence" value="ECO:0000353"/>
    <property type="project" value="BHF-UCL"/>
</dbReference>
<dbReference type="GO" id="GO:0061629">
    <property type="term" value="F:RNA polymerase II-specific DNA-binding transcription factor binding"/>
    <property type="evidence" value="ECO:0000266"/>
    <property type="project" value="RGD"/>
</dbReference>
<dbReference type="GO" id="GO:0097110">
    <property type="term" value="F:scaffold protein binding"/>
    <property type="evidence" value="ECO:0000266"/>
    <property type="project" value="RGD"/>
</dbReference>
<dbReference type="GO" id="GO:0048156">
    <property type="term" value="F:tau protein binding"/>
    <property type="evidence" value="ECO:0000314"/>
    <property type="project" value="RGD"/>
</dbReference>
<dbReference type="GO" id="GO:0050321">
    <property type="term" value="F:tau-protein kinase activity"/>
    <property type="evidence" value="ECO:0000318"/>
    <property type="project" value="GO_Central"/>
</dbReference>
<dbReference type="GO" id="GO:0031625">
    <property type="term" value="F:ubiquitin protein ligase binding"/>
    <property type="evidence" value="ECO:0000266"/>
    <property type="project" value="RGD"/>
</dbReference>
<dbReference type="GO" id="GO:0009887">
    <property type="term" value="P:animal organ morphogenesis"/>
    <property type="evidence" value="ECO:0000266"/>
    <property type="project" value="RGD"/>
</dbReference>
<dbReference type="GO" id="GO:0141068">
    <property type="term" value="P:autosome genomic imprinting"/>
    <property type="evidence" value="ECO:0000266"/>
    <property type="project" value="RGD"/>
</dbReference>
<dbReference type="GO" id="GO:0048675">
    <property type="term" value="P:axon extension"/>
    <property type="evidence" value="ECO:0000266"/>
    <property type="project" value="RGD"/>
</dbReference>
<dbReference type="GO" id="GO:0007409">
    <property type="term" value="P:axonogenesis"/>
    <property type="evidence" value="ECO:0000266"/>
    <property type="project" value="RGD"/>
</dbReference>
<dbReference type="GO" id="GO:0046849">
    <property type="term" value="P:bone remodeling"/>
    <property type="evidence" value="ECO:0000314"/>
    <property type="project" value="RGD"/>
</dbReference>
<dbReference type="GO" id="GO:0060070">
    <property type="term" value="P:canonical Wnt signaling pathway"/>
    <property type="evidence" value="ECO:0000266"/>
    <property type="project" value="RGD"/>
</dbReference>
<dbReference type="GO" id="GO:0030154">
    <property type="term" value="P:cell differentiation"/>
    <property type="evidence" value="ECO:0000318"/>
    <property type="project" value="GO_Central"/>
</dbReference>
<dbReference type="GO" id="GO:0061049">
    <property type="term" value="P:cell growth involved in cardiac muscle cell development"/>
    <property type="evidence" value="ECO:0000314"/>
    <property type="project" value="RGD"/>
</dbReference>
<dbReference type="GO" id="GO:0016477">
    <property type="term" value="P:cell migration"/>
    <property type="evidence" value="ECO:0000266"/>
    <property type="project" value="RGD"/>
</dbReference>
<dbReference type="GO" id="GO:1904646">
    <property type="term" value="P:cellular response to amyloid-beta"/>
    <property type="evidence" value="ECO:0000314"/>
    <property type="project" value="ARUK-UCL"/>
</dbReference>
<dbReference type="GO" id="GO:1903351">
    <property type="term" value="P:cellular response to dopamine"/>
    <property type="evidence" value="ECO:0000270"/>
    <property type="project" value="RGD"/>
</dbReference>
<dbReference type="GO" id="GO:0036018">
    <property type="term" value="P:cellular response to erythropoietin"/>
    <property type="evidence" value="ECO:0000270"/>
    <property type="project" value="RGD"/>
</dbReference>
<dbReference type="GO" id="GO:0071385">
    <property type="term" value="P:cellular response to glucocorticoid stimulus"/>
    <property type="evidence" value="ECO:0000266"/>
    <property type="project" value="RGD"/>
</dbReference>
<dbReference type="GO" id="GO:0035729">
    <property type="term" value="P:cellular response to hepatocyte growth factor stimulus"/>
    <property type="evidence" value="ECO:0000266"/>
    <property type="project" value="RGD"/>
</dbReference>
<dbReference type="GO" id="GO:0070301">
    <property type="term" value="P:cellular response to hydrogen peroxide"/>
    <property type="evidence" value="ECO:0000270"/>
    <property type="project" value="RGD"/>
</dbReference>
<dbReference type="GO" id="GO:0036016">
    <property type="term" value="P:cellular response to interleukin-3"/>
    <property type="evidence" value="ECO:0000250"/>
    <property type="project" value="UniProtKB"/>
</dbReference>
<dbReference type="GO" id="GO:0071282">
    <property type="term" value="P:cellular response to iron(II) ion"/>
    <property type="evidence" value="ECO:0000270"/>
    <property type="project" value="RGD"/>
</dbReference>
<dbReference type="GO" id="GO:0071285">
    <property type="term" value="P:cellular response to lithium ion"/>
    <property type="evidence" value="ECO:0000270"/>
    <property type="project" value="RGD"/>
</dbReference>
<dbReference type="GO" id="GO:0071260">
    <property type="term" value="P:cellular response to mechanical stimulus"/>
    <property type="evidence" value="ECO:0000314"/>
    <property type="project" value="RGD"/>
</dbReference>
<dbReference type="GO" id="GO:0071300">
    <property type="term" value="P:cellular response to retinoic acid"/>
    <property type="evidence" value="ECO:0000266"/>
    <property type="project" value="RGD"/>
</dbReference>
<dbReference type="GO" id="GO:0007623">
    <property type="term" value="P:circadian rhythm"/>
    <property type="evidence" value="ECO:0000250"/>
    <property type="project" value="UniProtKB"/>
</dbReference>
<dbReference type="GO" id="GO:0001837">
    <property type="term" value="P:epithelial to mesenchymal transition"/>
    <property type="evidence" value="ECO:0000250"/>
    <property type="project" value="UniProtKB"/>
</dbReference>
<dbReference type="GO" id="GO:0006983">
    <property type="term" value="P:ER overload response"/>
    <property type="evidence" value="ECO:0000266"/>
    <property type="project" value="RGD"/>
</dbReference>
<dbReference type="GO" id="GO:0030010">
    <property type="term" value="P:establishment of cell polarity"/>
    <property type="evidence" value="ECO:0000314"/>
    <property type="project" value="RGD"/>
</dbReference>
<dbReference type="GO" id="GO:0007163">
    <property type="term" value="P:establishment or maintenance of cell polarity"/>
    <property type="evidence" value="ECO:0000314"/>
    <property type="project" value="RGD"/>
</dbReference>
<dbReference type="GO" id="GO:0097191">
    <property type="term" value="P:extrinsic apoptotic signaling pathway"/>
    <property type="evidence" value="ECO:0000266"/>
    <property type="project" value="RGD"/>
</dbReference>
<dbReference type="GO" id="GO:0097192">
    <property type="term" value="P:extrinsic apoptotic signaling pathway in absence of ligand"/>
    <property type="evidence" value="ECO:0000250"/>
    <property type="project" value="UniProtKB"/>
</dbReference>
<dbReference type="GO" id="GO:0045444">
    <property type="term" value="P:fat cell differentiation"/>
    <property type="evidence" value="ECO:0000266"/>
    <property type="project" value="RGD"/>
</dbReference>
<dbReference type="GO" id="GO:0005977">
    <property type="term" value="P:glycogen metabolic process"/>
    <property type="evidence" value="ECO:0000266"/>
    <property type="project" value="RGD"/>
</dbReference>
<dbReference type="GO" id="GO:0035733">
    <property type="term" value="P:hepatic stellate cell activation"/>
    <property type="evidence" value="ECO:0000315"/>
    <property type="project" value="RGD"/>
</dbReference>
<dbReference type="GO" id="GO:0097284">
    <property type="term" value="P:hepatocyte apoptotic process"/>
    <property type="evidence" value="ECO:0000314"/>
    <property type="project" value="RGD"/>
</dbReference>
<dbReference type="GO" id="GO:0021766">
    <property type="term" value="P:hippocampus development"/>
    <property type="evidence" value="ECO:0000266"/>
    <property type="project" value="RGD"/>
</dbReference>
<dbReference type="GO" id="GO:0008286">
    <property type="term" value="P:insulin receptor signaling pathway"/>
    <property type="evidence" value="ECO:0000266"/>
    <property type="project" value="RGD"/>
</dbReference>
<dbReference type="GO" id="GO:0035556">
    <property type="term" value="P:intracellular signal transduction"/>
    <property type="evidence" value="ECO:0000266"/>
    <property type="project" value="RGD"/>
</dbReference>
<dbReference type="GO" id="GO:0070059">
    <property type="term" value="P:intrinsic apoptotic signaling pathway in response to endoplasmic reticulum stress"/>
    <property type="evidence" value="ECO:0000266"/>
    <property type="project" value="RGD"/>
</dbReference>
<dbReference type="GO" id="GO:0030011">
    <property type="term" value="P:maintenance of cell polarity"/>
    <property type="evidence" value="ECO:0000315"/>
    <property type="project" value="ARUK-UCL"/>
</dbReference>
<dbReference type="GO" id="GO:0007127">
    <property type="term" value="P:meiosis I"/>
    <property type="evidence" value="ECO:0000266"/>
    <property type="project" value="RGD"/>
</dbReference>
<dbReference type="GO" id="GO:0007005">
    <property type="term" value="P:mitochondrion organization"/>
    <property type="evidence" value="ECO:0000266"/>
    <property type="project" value="RGD"/>
</dbReference>
<dbReference type="GO" id="GO:0007520">
    <property type="term" value="P:myoblast fusion"/>
    <property type="evidence" value="ECO:0000266"/>
    <property type="project" value="RGD"/>
</dbReference>
<dbReference type="GO" id="GO:0014902">
    <property type="term" value="P:myotube differentiation"/>
    <property type="evidence" value="ECO:0000266"/>
    <property type="project" value="RGD"/>
</dbReference>
<dbReference type="GO" id="GO:0043066">
    <property type="term" value="P:negative regulation of apoptotic process"/>
    <property type="evidence" value="ECO:0000266"/>
    <property type="project" value="RGD"/>
</dbReference>
<dbReference type="GO" id="GO:0070885">
    <property type="term" value="P:negative regulation of calcineurin-NFAT signaling cascade"/>
    <property type="evidence" value="ECO:0000250"/>
    <property type="project" value="UniProtKB"/>
</dbReference>
<dbReference type="GO" id="GO:0090090">
    <property type="term" value="P:negative regulation of canonical Wnt signaling pathway"/>
    <property type="evidence" value="ECO:0000266"/>
    <property type="project" value="RGD"/>
</dbReference>
<dbReference type="GO" id="GO:0010614">
    <property type="term" value="P:negative regulation of cardiac muscle hypertrophy"/>
    <property type="evidence" value="ECO:0000266"/>
    <property type="project" value="RGD"/>
</dbReference>
<dbReference type="GO" id="GO:0030336">
    <property type="term" value="P:negative regulation of cell migration"/>
    <property type="evidence" value="ECO:0000266"/>
    <property type="project" value="RGD"/>
</dbReference>
<dbReference type="GO" id="GO:2000171">
    <property type="term" value="P:negative regulation of dendrite development"/>
    <property type="evidence" value="ECO:0000315"/>
    <property type="project" value="RGD"/>
</dbReference>
<dbReference type="GO" id="GO:0050774">
    <property type="term" value="P:negative regulation of dendrite morphogenesis"/>
    <property type="evidence" value="ECO:0000315"/>
    <property type="project" value="RGD"/>
</dbReference>
<dbReference type="GO" id="GO:1904339">
    <property type="term" value="P:negative regulation of dopaminergic neuron differentiation"/>
    <property type="evidence" value="ECO:0000315"/>
    <property type="project" value="RGD"/>
</dbReference>
<dbReference type="GO" id="GO:0010719">
    <property type="term" value="P:negative regulation of epithelial to mesenchymal transition"/>
    <property type="evidence" value="ECO:0000250"/>
    <property type="project" value="UniProtKB"/>
</dbReference>
<dbReference type="GO" id="GO:1902042">
    <property type="term" value="P:negative regulation of extrinsic apoptotic signaling pathway via death domain receptors"/>
    <property type="evidence" value="ECO:0000250"/>
    <property type="project" value="UniProtKB"/>
</dbReference>
<dbReference type="GO" id="GO:0010629">
    <property type="term" value="P:negative regulation of gene expression"/>
    <property type="evidence" value="ECO:0000266"/>
    <property type="project" value="RGD"/>
</dbReference>
<dbReference type="GO" id="GO:0045719">
    <property type="term" value="P:negative regulation of glycogen biosynthetic process"/>
    <property type="evidence" value="ECO:0000266"/>
    <property type="project" value="RGD"/>
</dbReference>
<dbReference type="GO" id="GO:0046627">
    <property type="term" value="P:negative regulation of insulin receptor signaling pathway"/>
    <property type="evidence" value="ECO:0000314"/>
    <property type="project" value="BHF-UCL"/>
</dbReference>
<dbReference type="GO" id="GO:2000740">
    <property type="term" value="P:negative regulation of mesenchymal stem cell differentiation"/>
    <property type="evidence" value="ECO:0000266"/>
    <property type="project" value="RGD"/>
</dbReference>
<dbReference type="GO" id="GO:0014043">
    <property type="term" value="P:negative regulation of neuron maturation"/>
    <property type="evidence" value="ECO:0000266"/>
    <property type="project" value="RGD"/>
</dbReference>
<dbReference type="GO" id="GO:2001223">
    <property type="term" value="P:negative regulation of neuron migration"/>
    <property type="evidence" value="ECO:0000315"/>
    <property type="project" value="RGD"/>
</dbReference>
<dbReference type="GO" id="GO:0010977">
    <property type="term" value="P:negative regulation of neuron projection development"/>
    <property type="evidence" value="ECO:0000266"/>
    <property type="project" value="RGD"/>
</dbReference>
<dbReference type="GO" id="GO:0045668">
    <property type="term" value="P:negative regulation of osteoblast differentiation"/>
    <property type="evidence" value="ECO:0000266"/>
    <property type="project" value="RGD"/>
</dbReference>
<dbReference type="GO" id="GO:1904780">
    <property type="term" value="P:negative regulation of protein localization to centrosome"/>
    <property type="evidence" value="ECO:0000266"/>
    <property type="project" value="RGD"/>
</dbReference>
<dbReference type="GO" id="GO:1900181">
    <property type="term" value="P:negative regulation of protein localization to nucleus"/>
    <property type="evidence" value="ECO:0000315"/>
    <property type="project" value="BHF-UCL"/>
</dbReference>
<dbReference type="GO" id="GO:0031333">
    <property type="term" value="P:negative regulation of protein-containing complex assembly"/>
    <property type="evidence" value="ECO:0000266"/>
    <property type="project" value="RGD"/>
</dbReference>
<dbReference type="GO" id="GO:0034392">
    <property type="term" value="P:negative regulation of smooth muscle cell apoptotic process"/>
    <property type="evidence" value="ECO:0000315"/>
    <property type="project" value="RGD"/>
</dbReference>
<dbReference type="GO" id="GO:0045886">
    <property type="term" value="P:negative regulation of synaptic assembly at neuromuscular junction"/>
    <property type="evidence" value="ECO:0000315"/>
    <property type="project" value="CACAO"/>
</dbReference>
<dbReference type="GO" id="GO:0032007">
    <property type="term" value="P:negative regulation of TOR signaling"/>
    <property type="evidence" value="ECO:0000266"/>
    <property type="project" value="RGD"/>
</dbReference>
<dbReference type="GO" id="GO:1903940">
    <property type="term" value="P:negative regulation of TORC2 signaling"/>
    <property type="evidence" value="ECO:0000250"/>
    <property type="project" value="UniProtKB"/>
</dbReference>
<dbReference type="GO" id="GO:0031175">
    <property type="term" value="P:neuron projection development"/>
    <property type="evidence" value="ECO:0000250"/>
    <property type="project" value="UniProtKB"/>
</dbReference>
<dbReference type="GO" id="GO:0106027">
    <property type="term" value="P:neuron projection organization"/>
    <property type="evidence" value="ECO:0000315"/>
    <property type="project" value="ARUK-UCL"/>
</dbReference>
<dbReference type="GO" id="GO:0018105">
    <property type="term" value="P:peptidyl-serine phosphorylation"/>
    <property type="evidence" value="ECO:0000250"/>
    <property type="project" value="UniProtKB"/>
</dbReference>
<dbReference type="GO" id="GO:0043491">
    <property type="term" value="P:phosphatidylinositol 3-kinase/protein kinase B signal transduction"/>
    <property type="evidence" value="ECO:0000266"/>
    <property type="project" value="RGD"/>
</dbReference>
<dbReference type="GO" id="GO:0043065">
    <property type="term" value="P:positive regulation of apoptotic process"/>
    <property type="evidence" value="ECO:0000314"/>
    <property type="project" value="RGD"/>
</dbReference>
<dbReference type="GO" id="GO:0010508">
    <property type="term" value="P:positive regulation of autophagy"/>
    <property type="evidence" value="ECO:0000250"/>
    <property type="project" value="UniProtKB"/>
</dbReference>
<dbReference type="GO" id="GO:0045773">
    <property type="term" value="P:positive regulation of axon extension"/>
    <property type="evidence" value="ECO:0000266"/>
    <property type="project" value="RGD"/>
</dbReference>
<dbReference type="GO" id="GO:2000727">
    <property type="term" value="P:positive regulation of cardiac muscle cell differentiation"/>
    <property type="evidence" value="ECO:0000266"/>
    <property type="project" value="RGD"/>
</dbReference>
<dbReference type="GO" id="GO:0045597">
    <property type="term" value="P:positive regulation of cell differentiation"/>
    <property type="evidence" value="ECO:0000266"/>
    <property type="project" value="RGD"/>
</dbReference>
<dbReference type="GO" id="GO:0001954">
    <property type="term" value="P:positive regulation of cell-matrix adhesion"/>
    <property type="evidence" value="ECO:0000266"/>
    <property type="project" value="RGD"/>
</dbReference>
<dbReference type="GO" id="GO:0045724">
    <property type="term" value="P:positive regulation of cilium assembly"/>
    <property type="evidence" value="ECO:0000250"/>
    <property type="project" value="UniProtKB"/>
</dbReference>
<dbReference type="GO" id="GO:2000573">
    <property type="term" value="P:positive regulation of DNA biosynthetic process"/>
    <property type="evidence" value="ECO:0000315"/>
    <property type="project" value="RGD"/>
</dbReference>
<dbReference type="GO" id="GO:2000463">
    <property type="term" value="P:positive regulation of excitatory postsynaptic potential"/>
    <property type="evidence" value="ECO:0000315"/>
    <property type="project" value="RGD"/>
</dbReference>
<dbReference type="GO" id="GO:0010628">
    <property type="term" value="P:positive regulation of gene expression"/>
    <property type="evidence" value="ECO:0000266"/>
    <property type="project" value="RGD"/>
</dbReference>
<dbReference type="GO" id="GO:0010918">
    <property type="term" value="P:positive regulation of mitochondrial membrane potential"/>
    <property type="evidence" value="ECO:0000315"/>
    <property type="project" value="RGD"/>
</dbReference>
<dbReference type="GO" id="GO:1901030">
    <property type="term" value="P:positive regulation of mitochondrial outer membrane permeabilization involved in apoptotic signaling pathway"/>
    <property type="evidence" value="ECO:0000250"/>
    <property type="project" value="UniProtKB"/>
</dbReference>
<dbReference type="GO" id="GO:0043525">
    <property type="term" value="P:positive regulation of neuron apoptotic process"/>
    <property type="evidence" value="ECO:0000315"/>
    <property type="project" value="RGD"/>
</dbReference>
<dbReference type="GO" id="GO:0033690">
    <property type="term" value="P:positive regulation of osteoblast proliferation"/>
    <property type="evidence" value="ECO:0000315"/>
    <property type="project" value="RGD"/>
</dbReference>
<dbReference type="GO" id="GO:0045672">
    <property type="term" value="P:positive regulation of osteoclast differentiation"/>
    <property type="evidence" value="ECO:0000315"/>
    <property type="project" value="RGD"/>
</dbReference>
<dbReference type="GO" id="GO:0090290">
    <property type="term" value="P:positive regulation of osteoclast proliferation"/>
    <property type="evidence" value="ECO:0000315"/>
    <property type="project" value="RGD"/>
</dbReference>
<dbReference type="GO" id="GO:0032436">
    <property type="term" value="P:positive regulation of proteasomal ubiquitin-dependent protein catabolic process"/>
    <property type="evidence" value="ECO:0000266"/>
    <property type="project" value="RGD"/>
</dbReference>
<dbReference type="GO" id="GO:0032092">
    <property type="term" value="P:positive regulation of protein binding"/>
    <property type="evidence" value="ECO:0000250"/>
    <property type="project" value="UniProtKB"/>
</dbReference>
<dbReference type="GO" id="GO:0045732">
    <property type="term" value="P:positive regulation of protein catabolic process"/>
    <property type="evidence" value="ECO:0000315"/>
    <property type="project" value="RGD"/>
</dbReference>
<dbReference type="GO" id="GO:0046827">
    <property type="term" value="P:positive regulation of protein export from nucleus"/>
    <property type="evidence" value="ECO:0000266"/>
    <property type="project" value="RGD"/>
</dbReference>
<dbReference type="GO" id="GO:1904781">
    <property type="term" value="P:positive regulation of protein localization to centrosome"/>
    <property type="evidence" value="ECO:0000266"/>
    <property type="project" value="RGD"/>
</dbReference>
<dbReference type="GO" id="GO:1903566">
    <property type="term" value="P:positive regulation of protein localization to cilium"/>
    <property type="evidence" value="ECO:0000250"/>
    <property type="project" value="UniProtKB"/>
</dbReference>
<dbReference type="GO" id="GO:0031398">
    <property type="term" value="P:positive regulation of protein ubiquitination"/>
    <property type="evidence" value="ECO:0000266"/>
    <property type="project" value="RGD"/>
</dbReference>
<dbReference type="GO" id="GO:0031334">
    <property type="term" value="P:positive regulation of protein-containing complex assembly"/>
    <property type="evidence" value="ECO:0000266"/>
    <property type="project" value="RGD"/>
</dbReference>
<dbReference type="GO" id="GO:0048661">
    <property type="term" value="P:positive regulation of smooth muscle cell proliferation"/>
    <property type="evidence" value="ECO:0000315"/>
    <property type="project" value="RGD"/>
</dbReference>
<dbReference type="GO" id="GO:2000738">
    <property type="term" value="P:positive regulation of stem cell differentiation"/>
    <property type="evidence" value="ECO:0000266"/>
    <property type="project" value="RGD"/>
</dbReference>
<dbReference type="GO" id="GO:0045887">
    <property type="term" value="P:positive regulation of synaptic assembly at neuromuscular junction"/>
    <property type="evidence" value="ECO:0000315"/>
    <property type="project" value="CACAO"/>
</dbReference>
<dbReference type="GO" id="GO:0045944">
    <property type="term" value="P:positive regulation of transcription by RNA polymerase II"/>
    <property type="evidence" value="ECO:0000266"/>
    <property type="project" value="RGD"/>
</dbReference>
<dbReference type="GO" id="GO:0099171">
    <property type="term" value="P:presynaptic modulation of chemical synaptic transmission"/>
    <property type="evidence" value="ECO:0000266"/>
    <property type="project" value="RGD"/>
</dbReference>
<dbReference type="GO" id="GO:0006611">
    <property type="term" value="P:protein export from nucleus"/>
    <property type="evidence" value="ECO:0000266"/>
    <property type="project" value="RGD"/>
</dbReference>
<dbReference type="GO" id="GO:0035372">
    <property type="term" value="P:protein localization to microtubule"/>
    <property type="evidence" value="ECO:0000266"/>
    <property type="project" value="RGD"/>
</dbReference>
<dbReference type="GO" id="GO:0000320">
    <property type="term" value="P:re-entry into mitotic cell cycle"/>
    <property type="evidence" value="ECO:0000266"/>
    <property type="project" value="RGD"/>
</dbReference>
<dbReference type="GO" id="GO:0042981">
    <property type="term" value="P:regulation of apoptotic process"/>
    <property type="evidence" value="ECO:0000266"/>
    <property type="project" value="RGD"/>
</dbReference>
<dbReference type="GO" id="GO:0030516">
    <property type="term" value="P:regulation of axon extension"/>
    <property type="evidence" value="ECO:0000315"/>
    <property type="project" value="RGD"/>
</dbReference>
<dbReference type="GO" id="GO:0050770">
    <property type="term" value="P:regulation of axonogenesis"/>
    <property type="evidence" value="ECO:0000315"/>
    <property type="project" value="RGD"/>
</dbReference>
<dbReference type="GO" id="GO:0001558">
    <property type="term" value="P:regulation of cell growth"/>
    <property type="evidence" value="ECO:0000266"/>
    <property type="project" value="RGD"/>
</dbReference>
<dbReference type="GO" id="GO:0042752">
    <property type="term" value="P:regulation of circadian rhythm"/>
    <property type="evidence" value="ECO:0000250"/>
    <property type="project" value="UniProtKB"/>
</dbReference>
<dbReference type="GO" id="GO:0048814">
    <property type="term" value="P:regulation of dendrite morphogenesis"/>
    <property type="evidence" value="ECO:0000315"/>
    <property type="project" value="RGD"/>
</dbReference>
<dbReference type="GO" id="GO:1900271">
    <property type="term" value="P:regulation of long-term synaptic potentiation"/>
    <property type="evidence" value="ECO:0000250"/>
    <property type="project" value="UniProtKB"/>
</dbReference>
<dbReference type="GO" id="GO:0150101">
    <property type="term" value="P:regulation of microtubule anchoring at centrosome"/>
    <property type="evidence" value="ECO:0000266"/>
    <property type="project" value="RGD"/>
</dbReference>
<dbReference type="GO" id="GO:0070507">
    <property type="term" value="P:regulation of microtubule cytoskeleton organization"/>
    <property type="evidence" value="ECO:0000315"/>
    <property type="project" value="ARUK-UCL"/>
</dbReference>
<dbReference type="GO" id="GO:0032886">
    <property type="term" value="P:regulation of microtubule-based process"/>
    <property type="evidence" value="ECO:0000250"/>
    <property type="project" value="UniProtKB"/>
</dbReference>
<dbReference type="GO" id="GO:0099159">
    <property type="term" value="P:regulation of modification of postsynaptic structure"/>
    <property type="evidence" value="ECO:0000314"/>
    <property type="project" value="SynGO"/>
</dbReference>
<dbReference type="GO" id="GO:0010975">
    <property type="term" value="P:regulation of neuron projection development"/>
    <property type="evidence" value="ECO:0000266"/>
    <property type="project" value="RGD"/>
</dbReference>
<dbReference type="GO" id="GO:0048168">
    <property type="term" value="P:regulation of neuronal synaptic plasticity"/>
    <property type="evidence" value="ECO:0000315"/>
    <property type="project" value="RGD"/>
</dbReference>
<dbReference type="GO" id="GO:0098696">
    <property type="term" value="P:regulation of neurotransmitter receptor localization to postsynaptic specialization membrane"/>
    <property type="evidence" value="ECO:0000314"/>
    <property type="project" value="SynGO"/>
</dbReference>
<dbReference type="GO" id="GO:0045667">
    <property type="term" value="P:regulation of osteoblast differentiation"/>
    <property type="evidence" value="ECO:0000315"/>
    <property type="project" value="RGD"/>
</dbReference>
<dbReference type="GO" id="GO:0046825">
    <property type="term" value="P:regulation of protein export from nucleus"/>
    <property type="evidence" value="ECO:0000266"/>
    <property type="project" value="RGD"/>
</dbReference>
<dbReference type="GO" id="GO:0014823">
    <property type="term" value="P:response to activity"/>
    <property type="evidence" value="ECO:0000270"/>
    <property type="project" value="RGD"/>
</dbReference>
<dbReference type="GO" id="GO:1990776">
    <property type="term" value="P:response to angiotensin"/>
    <property type="evidence" value="ECO:0000270"/>
    <property type="project" value="RGD"/>
</dbReference>
<dbReference type="GO" id="GO:0034976">
    <property type="term" value="P:response to endoplasmic reticulum stress"/>
    <property type="evidence" value="ECO:0000266"/>
    <property type="project" value="RGD"/>
</dbReference>
<dbReference type="GO" id="GO:0071871">
    <property type="term" value="P:response to epinephrine"/>
    <property type="evidence" value="ECO:0000270"/>
    <property type="project" value="RGD"/>
</dbReference>
<dbReference type="GO" id="GO:0032355">
    <property type="term" value="P:response to estradiol"/>
    <property type="evidence" value="ECO:0000270"/>
    <property type="project" value="RGD"/>
</dbReference>
<dbReference type="GO" id="GO:0032868">
    <property type="term" value="P:response to insulin"/>
    <property type="evidence" value="ECO:0000270"/>
    <property type="project" value="RGD"/>
</dbReference>
<dbReference type="GO" id="GO:1990418">
    <property type="term" value="P:response to insulin-like growth factor stimulus"/>
    <property type="evidence" value="ECO:0000270"/>
    <property type="project" value="RGD"/>
</dbReference>
<dbReference type="GO" id="GO:1902065">
    <property type="term" value="P:response to L-glutamate"/>
    <property type="evidence" value="ECO:0000270"/>
    <property type="project" value="RGD"/>
</dbReference>
<dbReference type="GO" id="GO:1990478">
    <property type="term" value="P:response to ultrasound"/>
    <property type="evidence" value="ECO:0000270"/>
    <property type="project" value="RGD"/>
</dbReference>
<dbReference type="GO" id="GO:0009410">
    <property type="term" value="P:response to xenobiotic stimulus"/>
    <property type="evidence" value="ECO:0000270"/>
    <property type="project" value="RGD"/>
</dbReference>
<dbReference type="GO" id="GO:0010043">
    <property type="term" value="P:response to zinc ion"/>
    <property type="evidence" value="ECO:0000314"/>
    <property type="project" value="RGD"/>
</dbReference>
<dbReference type="GO" id="GO:0048863">
    <property type="term" value="P:stem cell differentiation"/>
    <property type="evidence" value="ECO:0000266"/>
    <property type="project" value="RGD"/>
</dbReference>
<dbReference type="GO" id="GO:0071109">
    <property type="term" value="P:superior temporal gyrus development"/>
    <property type="evidence" value="ECO:0000266"/>
    <property type="project" value="RGD"/>
</dbReference>
<dbReference type="GO" id="GO:0006366">
    <property type="term" value="P:transcription by RNA polymerase II"/>
    <property type="evidence" value="ECO:0000266"/>
    <property type="project" value="RGD"/>
</dbReference>
<dbReference type="GO" id="GO:0016055">
    <property type="term" value="P:Wnt signaling pathway"/>
    <property type="evidence" value="ECO:0000266"/>
    <property type="project" value="RGD"/>
</dbReference>
<dbReference type="CDD" id="cd14137">
    <property type="entry name" value="STKc_GSK3"/>
    <property type="match status" value="1"/>
</dbReference>
<dbReference type="FunFam" id="1.10.510.10:FF:000055">
    <property type="entry name" value="Glycogen synthase kinase-3 beta"/>
    <property type="match status" value="1"/>
</dbReference>
<dbReference type="FunFam" id="3.30.200.20:FF:000009">
    <property type="entry name" value="Glycogen synthase kinase-3 beta"/>
    <property type="match status" value="1"/>
</dbReference>
<dbReference type="Gene3D" id="3.30.200.20">
    <property type="entry name" value="Phosphorylase Kinase, domain 1"/>
    <property type="match status" value="1"/>
</dbReference>
<dbReference type="Gene3D" id="1.10.510.10">
    <property type="entry name" value="Transferase(Phosphotransferase) domain 1"/>
    <property type="match status" value="1"/>
</dbReference>
<dbReference type="InterPro" id="IPR050591">
    <property type="entry name" value="GSK-3"/>
</dbReference>
<dbReference type="InterPro" id="IPR011009">
    <property type="entry name" value="Kinase-like_dom_sf"/>
</dbReference>
<dbReference type="InterPro" id="IPR000719">
    <property type="entry name" value="Prot_kinase_dom"/>
</dbReference>
<dbReference type="InterPro" id="IPR017441">
    <property type="entry name" value="Protein_kinase_ATP_BS"/>
</dbReference>
<dbReference type="InterPro" id="IPR008271">
    <property type="entry name" value="Ser/Thr_kinase_AS"/>
</dbReference>
<dbReference type="InterPro" id="IPR039192">
    <property type="entry name" value="STKc_GSK3"/>
</dbReference>
<dbReference type="PANTHER" id="PTHR24057">
    <property type="entry name" value="GLYCOGEN SYNTHASE KINASE-3 ALPHA"/>
    <property type="match status" value="1"/>
</dbReference>
<dbReference type="PANTHER" id="PTHR24057:SF8">
    <property type="entry name" value="GLYCOGEN SYNTHASE KINASE-3 BETA"/>
    <property type="match status" value="1"/>
</dbReference>
<dbReference type="Pfam" id="PF00069">
    <property type="entry name" value="Pkinase"/>
    <property type="match status" value="1"/>
</dbReference>
<dbReference type="SMART" id="SM00220">
    <property type="entry name" value="S_TKc"/>
    <property type="match status" value="1"/>
</dbReference>
<dbReference type="SUPFAM" id="SSF56112">
    <property type="entry name" value="Protein kinase-like (PK-like)"/>
    <property type="match status" value="1"/>
</dbReference>
<dbReference type="PROSITE" id="PS00107">
    <property type="entry name" value="PROTEIN_KINASE_ATP"/>
    <property type="match status" value="1"/>
</dbReference>
<dbReference type="PROSITE" id="PS50011">
    <property type="entry name" value="PROTEIN_KINASE_DOM"/>
    <property type="match status" value="1"/>
</dbReference>
<dbReference type="PROSITE" id="PS00108">
    <property type="entry name" value="PROTEIN_KINASE_ST"/>
    <property type="match status" value="1"/>
</dbReference>
<evidence type="ECO:0000250" key="1">
    <source>
        <dbReference type="UniProtKB" id="P49841"/>
    </source>
</evidence>
<evidence type="ECO:0000250" key="2">
    <source>
        <dbReference type="UniProtKB" id="Q9WV60"/>
    </source>
</evidence>
<evidence type="ECO:0000255" key="3">
    <source>
        <dbReference type="PROSITE-ProRule" id="PRU00159"/>
    </source>
</evidence>
<evidence type="ECO:0000255" key="4">
    <source>
        <dbReference type="PROSITE-ProRule" id="PRU10027"/>
    </source>
</evidence>
<evidence type="ECO:0000256" key="5">
    <source>
        <dbReference type="SAM" id="MobiDB-lite"/>
    </source>
</evidence>
<evidence type="ECO:0000269" key="6">
    <source>
    </source>
</evidence>
<evidence type="ECO:0000269" key="7">
    <source>
    </source>
</evidence>
<evidence type="ECO:0000269" key="8">
    <source>
    </source>
</evidence>
<evidence type="ECO:0000269" key="9">
    <source>
    </source>
</evidence>
<evidence type="ECO:0000269" key="10">
    <source>
    </source>
</evidence>
<evidence type="ECO:0000305" key="11"/>
<evidence type="ECO:0000305" key="12">
    <source>
    </source>
</evidence>
<evidence type="ECO:0000312" key="13">
    <source>
        <dbReference type="RGD" id="70982"/>
    </source>
</evidence>
<evidence type="ECO:0007744" key="14">
    <source>
    </source>
</evidence>
<keyword id="KW-0013">ADP-ribosylation</keyword>
<keyword id="KW-0067">ATP-binding</keyword>
<keyword id="KW-0090">Biological rhythms</keyword>
<keyword id="KW-0119">Carbohydrate metabolism</keyword>
<keyword id="KW-1003">Cell membrane</keyword>
<keyword id="KW-0963">Cytoplasm</keyword>
<keyword id="KW-0217">Developmental protein</keyword>
<keyword id="KW-0221">Differentiation</keyword>
<keyword id="KW-0321">Glycogen metabolism</keyword>
<keyword id="KW-0418">Kinase</keyword>
<keyword id="KW-0449">Lipoprotein</keyword>
<keyword id="KW-0472">Membrane</keyword>
<keyword id="KW-0524">Neurogenesis</keyword>
<keyword id="KW-0547">Nucleotide-binding</keyword>
<keyword id="KW-0539">Nucleus</keyword>
<keyword id="KW-0564">Palmitate</keyword>
<keyword id="KW-0597">Phosphoprotein</keyword>
<keyword id="KW-1185">Reference proteome</keyword>
<keyword id="KW-0723">Serine/threonine-protein kinase</keyword>
<keyword id="KW-0734">Signal transduction inhibitor</keyword>
<keyword id="KW-0808">Transferase</keyword>
<keyword id="KW-0879">Wnt signaling pathway</keyword>